<accession>A2T379</accession>
<sequence length="772" mass="86498">MELLYKNIWIVPVCPFVASMSVGLGLFFFPKATKSLRRICAIISIFLLGIAMFISFSIFWQQIRGNPNHQLLWSWFFNKDISLQIGFLIDPLTSTMLVSVTSVGILVMIYSDSYMSHDQGYVRFFAYLSLFTASMLGLVLSPNPVQIYIFWELVGMCSYLLIGFWFSRPSAANACQKAFITNRVGDFGLLLGILGTYWITGSFDIHSLSERFNDLIDSNGVNLFLANMCALLLFLGPAAKSAQFPLHVWLPDAMEGPTPISALIHAATMVAAGIFFVARMFHFFEALPFTMNIISWVGGITALLGATIALAQKDLKKGLAYSTMSQPGYMMLAPGIGSYRAASFHLITHAYSKALLFLGSGSVIHSMEPIVGYSPEKSQNMSFMGGLRKYMPITGTTFLLGTLSLCGIPPFACFWSKDEILVDSWIASASLGWIAWCTAGLTGFYMFRMYFVTFEGDFRGNLSYKDTDKSVSYKSIWGNLQTLSERDKVFSNNSYTSFSDPTGDFYEIPENVFSLPERRIKNKSLNIEKSFNVLSDFKGSDNRNEISEDAFVSINREIRNENILYPNESDNSMLFSLISLAIPTLFIGFIGVPFSHKGINSDLLSDLLAPLTDSFHKDNSENLVDFFLKSIPSVSIALVGVSISFFIYGPVSSRDLRKEIDPKTKDFLGYFFNSLSNWSYYRGYIDNLYNVIFIEGTRILSKSICFFDQWIIDGIVNGIGILSFFGGEGMRYGEGGRIPSYLFGLIIGNILMLIILIIKNDIIQSYEYFTMF</sequence>
<dbReference type="EC" id="7.1.1.-"/>
<dbReference type="EMBL" id="DQ821119">
    <property type="protein sequence ID" value="ABG79646.1"/>
    <property type="molecule type" value="Genomic_DNA"/>
</dbReference>
<dbReference type="RefSeq" id="YP_001023747.1">
    <property type="nucleotide sequence ID" value="NC_008829.1"/>
</dbReference>
<dbReference type="SMR" id="A2T379"/>
<dbReference type="GeneID" id="4788162"/>
<dbReference type="GO" id="GO:0009535">
    <property type="term" value="C:chloroplast thylakoid membrane"/>
    <property type="evidence" value="ECO:0007669"/>
    <property type="project" value="UniProtKB-SubCell"/>
</dbReference>
<dbReference type="GO" id="GO:0008137">
    <property type="term" value="F:NADH dehydrogenase (ubiquinone) activity"/>
    <property type="evidence" value="ECO:0007669"/>
    <property type="project" value="InterPro"/>
</dbReference>
<dbReference type="GO" id="GO:0048038">
    <property type="term" value="F:quinone binding"/>
    <property type="evidence" value="ECO:0007669"/>
    <property type="project" value="UniProtKB-KW"/>
</dbReference>
<dbReference type="GO" id="GO:0042773">
    <property type="term" value="P:ATP synthesis coupled electron transport"/>
    <property type="evidence" value="ECO:0007669"/>
    <property type="project" value="InterPro"/>
</dbReference>
<dbReference type="GO" id="GO:0015990">
    <property type="term" value="P:electron transport coupled proton transport"/>
    <property type="evidence" value="ECO:0007669"/>
    <property type="project" value="TreeGrafter"/>
</dbReference>
<dbReference type="Gene3D" id="1.20.5.2700">
    <property type="match status" value="1"/>
</dbReference>
<dbReference type="InterPro" id="IPR002128">
    <property type="entry name" value="NADH_UbQ_OxRdtase_chlpt_su5_C"/>
</dbReference>
<dbReference type="InterPro" id="IPR018393">
    <property type="entry name" value="NADHpl_OxRdtase_5_subgr"/>
</dbReference>
<dbReference type="InterPro" id="IPR001750">
    <property type="entry name" value="ND/Mrp_TM"/>
</dbReference>
<dbReference type="InterPro" id="IPR003945">
    <property type="entry name" value="NU5C-like"/>
</dbReference>
<dbReference type="InterPro" id="IPR001516">
    <property type="entry name" value="Proton_antipo_N"/>
</dbReference>
<dbReference type="NCBIfam" id="TIGR01974">
    <property type="entry name" value="NDH_I_L"/>
    <property type="match status" value="1"/>
</dbReference>
<dbReference type="NCBIfam" id="NF005141">
    <property type="entry name" value="PRK06590.1"/>
    <property type="match status" value="1"/>
</dbReference>
<dbReference type="PANTHER" id="PTHR42829">
    <property type="entry name" value="NADH-UBIQUINONE OXIDOREDUCTASE CHAIN 5"/>
    <property type="match status" value="1"/>
</dbReference>
<dbReference type="PANTHER" id="PTHR42829:SF2">
    <property type="entry name" value="NADH-UBIQUINONE OXIDOREDUCTASE CHAIN 5"/>
    <property type="match status" value="1"/>
</dbReference>
<dbReference type="Pfam" id="PF01010">
    <property type="entry name" value="Proton_antipo_C"/>
    <property type="match status" value="1"/>
</dbReference>
<dbReference type="Pfam" id="PF00361">
    <property type="entry name" value="Proton_antipo_M"/>
    <property type="match status" value="1"/>
</dbReference>
<dbReference type="Pfam" id="PF00662">
    <property type="entry name" value="Proton_antipo_N"/>
    <property type="match status" value="1"/>
</dbReference>
<dbReference type="PRINTS" id="PR01434">
    <property type="entry name" value="NADHDHGNASE5"/>
</dbReference>
<dbReference type="PRINTS" id="PR01435">
    <property type="entry name" value="NPOXDRDTASE5"/>
</dbReference>
<organism>
    <name type="scientific">Angiopteris evecta</name>
    <name type="common">Mule's foot fern</name>
    <name type="synonym">Polypodium evectum</name>
    <dbReference type="NCBI Taxonomy" id="13825"/>
    <lineage>
        <taxon>Eukaryota</taxon>
        <taxon>Viridiplantae</taxon>
        <taxon>Streptophyta</taxon>
        <taxon>Embryophyta</taxon>
        <taxon>Tracheophyta</taxon>
        <taxon>Polypodiopsida</taxon>
        <taxon>Marattiidae</taxon>
        <taxon>Marattiales</taxon>
        <taxon>Marattiaceae</taxon>
        <taxon>Angiopteris</taxon>
    </lineage>
</organism>
<geneLocation type="chloroplast"/>
<evidence type="ECO:0000250" key="1"/>
<evidence type="ECO:0000255" key="2"/>
<evidence type="ECO:0000305" key="3"/>
<gene>
    <name type="primary">ndhF</name>
</gene>
<keyword id="KW-0150">Chloroplast</keyword>
<keyword id="KW-0472">Membrane</keyword>
<keyword id="KW-0520">NAD</keyword>
<keyword id="KW-0521">NADP</keyword>
<keyword id="KW-0934">Plastid</keyword>
<keyword id="KW-0618">Plastoquinone</keyword>
<keyword id="KW-0874">Quinone</keyword>
<keyword id="KW-0793">Thylakoid</keyword>
<keyword id="KW-1278">Translocase</keyword>
<keyword id="KW-0812">Transmembrane</keyword>
<keyword id="KW-1133">Transmembrane helix</keyword>
<keyword id="KW-0813">Transport</keyword>
<comment type="function">
    <text evidence="1">NDH shuttles electrons from NAD(P)H:plastoquinone, via FMN and iron-sulfur (Fe-S) centers, to quinones in the photosynthetic chain and possibly in a chloroplast respiratory chain. The immediate electron acceptor for the enzyme in this species is believed to be plastoquinone. Couples the redox reaction to proton translocation, and thus conserves the redox energy in a proton gradient (By similarity).</text>
</comment>
<comment type="catalytic activity">
    <reaction>
        <text>a plastoquinone + NADH + (n+1) H(+)(in) = a plastoquinol + NAD(+) + n H(+)(out)</text>
        <dbReference type="Rhea" id="RHEA:42608"/>
        <dbReference type="Rhea" id="RHEA-COMP:9561"/>
        <dbReference type="Rhea" id="RHEA-COMP:9562"/>
        <dbReference type="ChEBI" id="CHEBI:15378"/>
        <dbReference type="ChEBI" id="CHEBI:17757"/>
        <dbReference type="ChEBI" id="CHEBI:57540"/>
        <dbReference type="ChEBI" id="CHEBI:57945"/>
        <dbReference type="ChEBI" id="CHEBI:62192"/>
    </reaction>
</comment>
<comment type="catalytic activity">
    <reaction>
        <text>a plastoquinone + NADPH + (n+1) H(+)(in) = a plastoquinol + NADP(+) + n H(+)(out)</text>
        <dbReference type="Rhea" id="RHEA:42612"/>
        <dbReference type="Rhea" id="RHEA-COMP:9561"/>
        <dbReference type="Rhea" id="RHEA-COMP:9562"/>
        <dbReference type="ChEBI" id="CHEBI:15378"/>
        <dbReference type="ChEBI" id="CHEBI:17757"/>
        <dbReference type="ChEBI" id="CHEBI:57783"/>
        <dbReference type="ChEBI" id="CHEBI:58349"/>
        <dbReference type="ChEBI" id="CHEBI:62192"/>
    </reaction>
</comment>
<comment type="subunit">
    <text evidence="1">NDH is composed of at least 16 different subunits, 5 of which are encoded in the nucleus.</text>
</comment>
<comment type="subcellular location">
    <subcellularLocation>
        <location evidence="1">Plastid</location>
        <location evidence="1">Chloroplast thylakoid membrane</location>
        <topology evidence="1">Multi-pass membrane protein</topology>
    </subcellularLocation>
</comment>
<comment type="similarity">
    <text evidence="3">Belongs to the complex I subunit 5 family.</text>
</comment>
<proteinExistence type="inferred from homology"/>
<reference key="1">
    <citation type="journal article" date="2007" name="Am. Fern J.">
        <title>The complete plastid genome sequence of Angiopteris evecta (G. Forst.) Hoffm. (Marattiaceae).</title>
        <authorList>
            <person name="Roper J.M."/>
            <person name="Hansen S.K."/>
            <person name="Wolf P.G."/>
            <person name="Karol K.G."/>
            <person name="Mandoli D.F."/>
            <person name="Everett K.D.E."/>
            <person name="Kuehl J."/>
            <person name="Boore J.L."/>
        </authorList>
    </citation>
    <scope>NUCLEOTIDE SEQUENCE [LARGE SCALE GENOMIC DNA]</scope>
</reference>
<feature type="chain" id="PRO_0000360910" description="NAD(P)H-quinone oxidoreductase subunit 5, chloroplastic">
    <location>
        <begin position="1"/>
        <end position="772"/>
    </location>
</feature>
<feature type="transmembrane region" description="Helical" evidence="2">
    <location>
        <begin position="8"/>
        <end position="28"/>
    </location>
</feature>
<feature type="transmembrane region" description="Helical" evidence="2">
    <location>
        <begin position="39"/>
        <end position="59"/>
    </location>
</feature>
<feature type="transmembrane region" description="Helical" evidence="2">
    <location>
        <begin position="87"/>
        <end position="107"/>
    </location>
</feature>
<feature type="transmembrane region" description="Helical" evidence="2">
    <location>
        <begin position="120"/>
        <end position="140"/>
    </location>
</feature>
<feature type="transmembrane region" description="Helical" evidence="2">
    <location>
        <begin position="147"/>
        <end position="167"/>
    </location>
</feature>
<feature type="transmembrane region" description="Helical" evidence="2">
    <location>
        <begin position="185"/>
        <end position="205"/>
    </location>
</feature>
<feature type="transmembrane region" description="Helical" evidence="2">
    <location>
        <begin position="219"/>
        <end position="239"/>
    </location>
</feature>
<feature type="transmembrane region" description="Helical" evidence="2">
    <location>
        <begin position="258"/>
        <end position="278"/>
    </location>
</feature>
<feature type="transmembrane region" description="Helical" evidence="2">
    <location>
        <begin position="291"/>
        <end position="311"/>
    </location>
</feature>
<feature type="transmembrane region" description="Helical" evidence="2">
    <location>
        <begin position="395"/>
        <end position="415"/>
    </location>
</feature>
<feature type="transmembrane region" description="Helical" evidence="2">
    <location>
        <begin position="425"/>
        <end position="445"/>
    </location>
</feature>
<feature type="transmembrane region" description="Helical" evidence="2">
    <location>
        <begin position="574"/>
        <end position="594"/>
    </location>
</feature>
<feature type="transmembrane region" description="Helical" evidence="2">
    <location>
        <begin position="631"/>
        <end position="651"/>
    </location>
</feature>
<feature type="transmembrane region" description="Helical" evidence="2">
    <location>
        <begin position="710"/>
        <end position="730"/>
    </location>
</feature>
<feature type="transmembrane region" description="Helical" evidence="2">
    <location>
        <begin position="738"/>
        <end position="758"/>
    </location>
</feature>
<protein>
    <recommendedName>
        <fullName>NAD(P)H-quinone oxidoreductase subunit 5, chloroplastic</fullName>
        <ecNumber>7.1.1.-</ecNumber>
    </recommendedName>
    <alternativeName>
        <fullName>NAD(P)H dehydrogenase subunit 5</fullName>
    </alternativeName>
    <alternativeName>
        <fullName>NADH-plastoquinone oxidoreductase subunit 5</fullName>
    </alternativeName>
</protein>
<name>NU5C_ANGEV</name>